<evidence type="ECO:0000255" key="1">
    <source>
        <dbReference type="HAMAP-Rule" id="MF_01375"/>
    </source>
</evidence>
<sequence length="275" mass="30051">MNYNNPTQLQAAILDWAGTVVDFGSFAPTQIFVEAFAEFDVQVSIEEARGPMGMGKWDHIRTLCDVPEIAERYRKVFGRTPTDDDVTAIYNRFMPLQIEKIAVHSALIPGALDTLTGLRQDGLKIGSCSGYPKVVMDKVVELAAQNGYVADHVVATDETPNGRPWPAQALANVIALGIDDVAACVKVDDTVPGILEGRRAGMWTVALVCSGNALGLTWEGFRALSAEKLESERQRIHALFAGSRPHYLIDTINDLPEVIADINRRLAKGEMPQAF</sequence>
<protein>
    <recommendedName>
        <fullName evidence="1">Phosphonoacetaldehyde hydrolase</fullName>
        <shortName evidence="1">Phosphonatase</shortName>
        <ecNumber evidence="1">3.11.1.1</ecNumber>
    </recommendedName>
    <alternativeName>
        <fullName evidence="1">Phosphonoacetaldehyde phosphonohydrolase</fullName>
    </alternativeName>
</protein>
<comment type="function">
    <text evidence="1">Involved in phosphonate degradation.</text>
</comment>
<comment type="catalytic activity">
    <reaction evidence="1">
        <text>phosphonoacetaldehyde + H2O = acetaldehyde + phosphate + H(+)</text>
        <dbReference type="Rhea" id="RHEA:18905"/>
        <dbReference type="ChEBI" id="CHEBI:15343"/>
        <dbReference type="ChEBI" id="CHEBI:15377"/>
        <dbReference type="ChEBI" id="CHEBI:15378"/>
        <dbReference type="ChEBI" id="CHEBI:43474"/>
        <dbReference type="ChEBI" id="CHEBI:58383"/>
        <dbReference type="EC" id="3.11.1.1"/>
    </reaction>
</comment>
<comment type="cofactor">
    <cofactor evidence="1">
        <name>Mg(2+)</name>
        <dbReference type="ChEBI" id="CHEBI:18420"/>
    </cofactor>
    <text evidence="1">Binds 1 Mg(2+) ion per subunit.</text>
</comment>
<comment type="subunit">
    <text evidence="1">Homodimer.</text>
</comment>
<comment type="similarity">
    <text evidence="1">Belongs to the HAD-like hydrolase superfamily. PhnX family.</text>
</comment>
<keyword id="KW-0378">Hydrolase</keyword>
<keyword id="KW-0460">Magnesium</keyword>
<keyword id="KW-0479">Metal-binding</keyword>
<keyword id="KW-1185">Reference proteome</keyword>
<keyword id="KW-0704">Schiff base</keyword>
<accession>Q88KT1</accession>
<name>PHNX_PSEPK</name>
<feature type="chain" id="PRO_0000284596" description="Phosphonoacetaldehyde hydrolase">
    <location>
        <begin position="1"/>
        <end position="275"/>
    </location>
</feature>
<feature type="active site" description="Nucleophile" evidence="1">
    <location>
        <position position="15"/>
    </location>
</feature>
<feature type="active site" description="Schiff-base intermediate with substrate" evidence="1">
    <location>
        <position position="56"/>
    </location>
</feature>
<feature type="binding site" evidence="1">
    <location>
        <position position="15"/>
    </location>
    <ligand>
        <name>Mg(2+)</name>
        <dbReference type="ChEBI" id="CHEBI:18420"/>
    </ligand>
</feature>
<feature type="binding site" evidence="1">
    <location>
        <position position="17"/>
    </location>
    <ligand>
        <name>Mg(2+)</name>
        <dbReference type="ChEBI" id="CHEBI:18420"/>
    </ligand>
</feature>
<feature type="binding site" evidence="1">
    <location>
        <position position="189"/>
    </location>
    <ligand>
        <name>Mg(2+)</name>
        <dbReference type="ChEBI" id="CHEBI:18420"/>
    </ligand>
</feature>
<reference key="1">
    <citation type="journal article" date="2002" name="Environ. Microbiol.">
        <title>Complete genome sequence and comparative analysis of the metabolically versatile Pseudomonas putida KT2440.</title>
        <authorList>
            <person name="Nelson K.E."/>
            <person name="Weinel C."/>
            <person name="Paulsen I.T."/>
            <person name="Dodson R.J."/>
            <person name="Hilbert H."/>
            <person name="Martins dos Santos V.A.P."/>
            <person name="Fouts D.E."/>
            <person name="Gill S.R."/>
            <person name="Pop M."/>
            <person name="Holmes M."/>
            <person name="Brinkac L.M."/>
            <person name="Beanan M.J."/>
            <person name="DeBoy R.T."/>
            <person name="Daugherty S.C."/>
            <person name="Kolonay J.F."/>
            <person name="Madupu R."/>
            <person name="Nelson W.C."/>
            <person name="White O."/>
            <person name="Peterson J.D."/>
            <person name="Khouri H.M."/>
            <person name="Hance I."/>
            <person name="Chris Lee P."/>
            <person name="Holtzapple E.K."/>
            <person name="Scanlan D."/>
            <person name="Tran K."/>
            <person name="Moazzez A."/>
            <person name="Utterback T.R."/>
            <person name="Rizzo M."/>
            <person name="Lee K."/>
            <person name="Kosack D."/>
            <person name="Moestl D."/>
            <person name="Wedler H."/>
            <person name="Lauber J."/>
            <person name="Stjepandic D."/>
            <person name="Hoheisel J."/>
            <person name="Straetz M."/>
            <person name="Heim S."/>
            <person name="Kiewitz C."/>
            <person name="Eisen J.A."/>
            <person name="Timmis K.N."/>
            <person name="Duesterhoeft A."/>
            <person name="Tuemmler B."/>
            <person name="Fraser C.M."/>
        </authorList>
    </citation>
    <scope>NUCLEOTIDE SEQUENCE [LARGE SCALE GENOMIC DNA]</scope>
    <source>
        <strain>ATCC 47054 / DSM 6125 / CFBP 8728 / NCIMB 11950 / KT2440</strain>
    </source>
</reference>
<organism>
    <name type="scientific">Pseudomonas putida (strain ATCC 47054 / DSM 6125 / CFBP 8728 / NCIMB 11950 / KT2440)</name>
    <dbReference type="NCBI Taxonomy" id="160488"/>
    <lineage>
        <taxon>Bacteria</taxon>
        <taxon>Pseudomonadati</taxon>
        <taxon>Pseudomonadota</taxon>
        <taxon>Gammaproteobacteria</taxon>
        <taxon>Pseudomonadales</taxon>
        <taxon>Pseudomonadaceae</taxon>
        <taxon>Pseudomonas</taxon>
    </lineage>
</organism>
<dbReference type="EC" id="3.11.1.1" evidence="1"/>
<dbReference type="EMBL" id="AE015451">
    <property type="protein sequence ID" value="AAN67821.1"/>
    <property type="molecule type" value="Genomic_DNA"/>
</dbReference>
<dbReference type="RefSeq" id="NP_744357.1">
    <property type="nucleotide sequence ID" value="NC_002947.4"/>
</dbReference>
<dbReference type="RefSeq" id="WP_003250077.1">
    <property type="nucleotide sequence ID" value="NZ_CP169744.1"/>
</dbReference>
<dbReference type="SMR" id="Q88KT1"/>
<dbReference type="STRING" id="160488.PP_2208"/>
<dbReference type="PaxDb" id="160488-PP_2208"/>
<dbReference type="GeneID" id="83681269"/>
<dbReference type="KEGG" id="ppu:PP_2208"/>
<dbReference type="PATRIC" id="fig|160488.4.peg.2330"/>
<dbReference type="eggNOG" id="COG0637">
    <property type="taxonomic scope" value="Bacteria"/>
</dbReference>
<dbReference type="HOGENOM" id="CLU_045011_12_0_6"/>
<dbReference type="OrthoDB" id="5504491at2"/>
<dbReference type="PhylomeDB" id="Q88KT1"/>
<dbReference type="BioCyc" id="PPUT160488:G1G01-2349-MONOMER"/>
<dbReference type="Proteomes" id="UP000000556">
    <property type="component" value="Chromosome"/>
</dbReference>
<dbReference type="GO" id="GO:0005829">
    <property type="term" value="C:cytosol"/>
    <property type="evidence" value="ECO:0007669"/>
    <property type="project" value="TreeGrafter"/>
</dbReference>
<dbReference type="GO" id="GO:0000287">
    <property type="term" value="F:magnesium ion binding"/>
    <property type="evidence" value="ECO:0007669"/>
    <property type="project" value="UniProtKB-UniRule"/>
</dbReference>
<dbReference type="GO" id="GO:0008967">
    <property type="term" value="F:phosphoglycolate phosphatase activity"/>
    <property type="evidence" value="ECO:0007669"/>
    <property type="project" value="TreeGrafter"/>
</dbReference>
<dbReference type="GO" id="GO:0050194">
    <property type="term" value="F:phosphonoacetaldehyde hydrolase activity"/>
    <property type="evidence" value="ECO:0007669"/>
    <property type="project" value="UniProtKB-UniRule"/>
</dbReference>
<dbReference type="GO" id="GO:0006281">
    <property type="term" value="P:DNA repair"/>
    <property type="evidence" value="ECO:0007669"/>
    <property type="project" value="TreeGrafter"/>
</dbReference>
<dbReference type="GO" id="GO:0019700">
    <property type="term" value="P:organic phosphonate catabolic process"/>
    <property type="evidence" value="ECO:0007669"/>
    <property type="project" value="InterPro"/>
</dbReference>
<dbReference type="CDD" id="cd02586">
    <property type="entry name" value="HAD_PHN"/>
    <property type="match status" value="1"/>
</dbReference>
<dbReference type="FunFam" id="1.10.150.240:FF:000006">
    <property type="entry name" value="Phosphonoacetaldehyde hydrolase"/>
    <property type="match status" value="1"/>
</dbReference>
<dbReference type="Gene3D" id="3.40.50.1000">
    <property type="entry name" value="HAD superfamily/HAD-like"/>
    <property type="match status" value="1"/>
</dbReference>
<dbReference type="Gene3D" id="1.10.150.240">
    <property type="entry name" value="Putative phosphatase, domain 2"/>
    <property type="match status" value="1"/>
</dbReference>
<dbReference type="HAMAP" id="MF_01375">
    <property type="entry name" value="PhnX"/>
    <property type="match status" value="1"/>
</dbReference>
<dbReference type="InterPro" id="IPR050155">
    <property type="entry name" value="HAD-like_hydrolase_sf"/>
</dbReference>
<dbReference type="InterPro" id="IPR036412">
    <property type="entry name" value="HAD-like_sf"/>
</dbReference>
<dbReference type="InterPro" id="IPR006439">
    <property type="entry name" value="HAD-SF_hydro_IA"/>
</dbReference>
<dbReference type="InterPro" id="IPR023214">
    <property type="entry name" value="HAD_sf"/>
</dbReference>
<dbReference type="InterPro" id="IPR023198">
    <property type="entry name" value="PGP-like_dom2"/>
</dbReference>
<dbReference type="InterPro" id="IPR006323">
    <property type="entry name" value="Phosphonoacetald_hydro"/>
</dbReference>
<dbReference type="NCBIfam" id="TIGR01509">
    <property type="entry name" value="HAD-SF-IA-v3"/>
    <property type="match status" value="1"/>
</dbReference>
<dbReference type="NCBIfam" id="TIGR01422">
    <property type="entry name" value="phosphonatase"/>
    <property type="match status" value="1"/>
</dbReference>
<dbReference type="PANTHER" id="PTHR43434">
    <property type="entry name" value="PHOSPHOGLYCOLATE PHOSPHATASE"/>
    <property type="match status" value="1"/>
</dbReference>
<dbReference type="PANTHER" id="PTHR43434:SF19">
    <property type="entry name" value="PHOSPHONOACETALDEHYDE HYDROLASE"/>
    <property type="match status" value="1"/>
</dbReference>
<dbReference type="Pfam" id="PF00702">
    <property type="entry name" value="Hydrolase"/>
    <property type="match status" value="1"/>
</dbReference>
<dbReference type="SFLD" id="SFLDS00003">
    <property type="entry name" value="Haloacid_Dehalogenase"/>
    <property type="match status" value="1"/>
</dbReference>
<dbReference type="SFLD" id="SFLDF00038">
    <property type="entry name" value="phosphonoacetaldehyde_hydrolas"/>
    <property type="match status" value="1"/>
</dbReference>
<dbReference type="SUPFAM" id="SSF56784">
    <property type="entry name" value="HAD-like"/>
    <property type="match status" value="1"/>
</dbReference>
<proteinExistence type="inferred from homology"/>
<gene>
    <name evidence="1" type="primary">phnX</name>
    <name type="ordered locus">PP_2208</name>
</gene>